<proteinExistence type="inferred from homology"/>
<protein>
    <recommendedName>
        <fullName>Autophagy-related protein 3</fullName>
    </recommendedName>
    <alternativeName>
        <fullName>Autophagy-related E2-like conjugation enzyme ATG3</fullName>
    </alternativeName>
</protein>
<gene>
    <name type="primary">ATG3</name>
    <name type="ordered locus">CAALFM_C100860WA</name>
    <name type="ORF">CaO19.13441</name>
    <name type="ORF">CaO19.6020</name>
</gene>
<comment type="function">
    <text evidence="1">E2 conjugating enzyme required for the cytoplasm to vacuole transport (Cvt) and autophagy. Required for selective autophagic degradation of the nucleus (nucleophagy) as well as for mitophagy which contributes to regulate mitochondrial quantity and quality by eliminating the mitochondria to a basal level to fulfill cellular energy requirements and preventing excess ROS production. Responsible for the E2-like covalent binding of phosphatidylethanolamine to the C-terminal Gly of ATG8. The ATG12-ATG5 conjugate plays a role of an E3 and promotes the transfer of ATG8 from ATG3 to phosphatidylethanolamine (PE). This step is required for the membrane association of ATG8. The formation of the ATG8-phosphatidylethanolamine conjugate is essential for autophagy and for the cytoplasm to vacuole transport (Cvt). The ATG8-PE conjugate mediates tethering between adjacent membranes and stimulates membrane hemifusion, leading to expansion of the autophagosomal membrane during autophagy (By similarity).</text>
</comment>
<comment type="subunit">
    <text evidence="1">Monomer. Interacts with ATG8 through an intermediate thioester bond through the C-terminal Gly of ATG8. Also interacts with the 40 amino acid C-terminal region of the E1-like ATG7 enzyme. Also interacts with the ATG12-ATG5 conjugate.</text>
</comment>
<comment type="subcellular location">
    <subcellularLocation>
        <location evidence="1">Cytoplasm</location>
    </subcellularLocation>
</comment>
<comment type="domain">
    <text evidence="1">The N-terminal region is involved in phosphatidylethanolamine-binding and is required for ATG8-PE conjugation.</text>
</comment>
<comment type="domain">
    <text evidence="1">The flexible region (FR) is required for ATG7-binding.</text>
</comment>
<comment type="domain">
    <text evidence="1">The handle region (HR) contains the ATG8 interaction motif (AIM) and mediates binding to ATG8. It is crucial for the cytoplasm-to-vacuole targeting pathway (By similarity).</text>
</comment>
<comment type="similarity">
    <text evidence="3">Belongs to the ATG3 family.</text>
</comment>
<feature type="chain" id="PRO_0000213576" description="Autophagy-related protein 3">
    <location>
        <begin position="1"/>
        <end position="333"/>
    </location>
</feature>
<feature type="region of interest" description="Disordered" evidence="2">
    <location>
        <begin position="81"/>
        <end position="112"/>
    </location>
</feature>
<feature type="region of interest" description="Flexible region" evidence="1">
    <location>
        <begin position="84"/>
        <end position="174"/>
    </location>
</feature>
<feature type="region of interest" description="Handle region" evidence="1">
    <location>
        <begin position="248"/>
        <end position="308"/>
    </location>
</feature>
<feature type="region of interest" description="Disordered" evidence="2">
    <location>
        <begin position="278"/>
        <end position="300"/>
    </location>
</feature>
<feature type="compositionally biased region" description="Acidic residues" evidence="2">
    <location>
        <begin position="95"/>
        <end position="108"/>
    </location>
</feature>
<feature type="compositionally biased region" description="Basic and acidic residues" evidence="2">
    <location>
        <begin position="278"/>
        <end position="290"/>
    </location>
</feature>
<feature type="active site" description="Glycyl thioester intermediate" evidence="1">
    <location>
        <position position="244"/>
    </location>
</feature>
<sequence>MSLRSKLSSLREYLTPINHNSNFVTTGEISPEEFVKAGDYLVYKFPTWQWGNDCPKNLQKSFLPPDKQYLVTRHVPSYQRASNYLTGEDKKGANPEEDDEEEEEEDEEGWVKSKKIHKVIDDTHDSQINKGEEINDIDDFIDENAEEQEHDQIGDHELDDDEFDDLDIINDSKNNKLRRFDLYITYSTSYRVPKLYLVGFDSNGIPLLPQQMFEDINSDYKDKTATIENLPVAHNTTSVSIHPCKHSSVMKVLMKHSKLNKKNLQQKDESLSDDLSKLSVNEKKTQDEHSQINNDDKEEEEEGIRVDHYLIIFLKFIASVTPGIEYDYTMDAL</sequence>
<dbReference type="EMBL" id="CP017623">
    <property type="protein sequence ID" value="AOW25783.1"/>
    <property type="molecule type" value="Genomic_DNA"/>
</dbReference>
<dbReference type="RefSeq" id="XP_718982.1">
    <property type="nucleotide sequence ID" value="XM_713889.1"/>
</dbReference>
<dbReference type="SMR" id="Q5ABQ7"/>
<dbReference type="FunCoup" id="Q5ABQ7">
    <property type="interactions" value="1124"/>
</dbReference>
<dbReference type="STRING" id="237561.Q5ABQ7"/>
<dbReference type="EnsemblFungi" id="C1_00860W_A-T">
    <property type="protein sequence ID" value="C1_00860W_A-T-p1"/>
    <property type="gene ID" value="C1_00860W_A"/>
</dbReference>
<dbReference type="GeneID" id="3639358"/>
<dbReference type="KEGG" id="cal:CAALFM_C100860WA"/>
<dbReference type="CGD" id="CAL0000193447">
    <property type="gene designation" value="orf19.13441"/>
</dbReference>
<dbReference type="VEuPathDB" id="FungiDB:C1_00860W_A"/>
<dbReference type="eggNOG" id="KOG2981">
    <property type="taxonomic scope" value="Eukaryota"/>
</dbReference>
<dbReference type="HOGENOM" id="CLU_027518_2_0_1"/>
<dbReference type="InParanoid" id="Q5ABQ7"/>
<dbReference type="OrthoDB" id="1584384at2759"/>
<dbReference type="PRO" id="PR:Q5ABQ7"/>
<dbReference type="Proteomes" id="UP000000559">
    <property type="component" value="Chromosome 1"/>
</dbReference>
<dbReference type="GO" id="GO:0005829">
    <property type="term" value="C:cytosol"/>
    <property type="evidence" value="ECO:0000318"/>
    <property type="project" value="GO_Central"/>
</dbReference>
<dbReference type="GO" id="GO:0005739">
    <property type="term" value="C:mitochondrion"/>
    <property type="evidence" value="ECO:0007669"/>
    <property type="project" value="EnsemblFungi"/>
</dbReference>
<dbReference type="GO" id="GO:0061908">
    <property type="term" value="C:phagophore"/>
    <property type="evidence" value="ECO:0007669"/>
    <property type="project" value="EnsemblFungi"/>
</dbReference>
<dbReference type="GO" id="GO:0000407">
    <property type="term" value="C:phagophore assembly site"/>
    <property type="evidence" value="ECO:0000318"/>
    <property type="project" value="GO_Central"/>
</dbReference>
<dbReference type="GO" id="GO:0141046">
    <property type="term" value="F:Atg8-family conjugating enzyme activity"/>
    <property type="evidence" value="ECO:0000318"/>
    <property type="project" value="GO_Central"/>
</dbReference>
<dbReference type="GO" id="GO:0019776">
    <property type="term" value="F:Atg8-family ligase activity"/>
    <property type="evidence" value="ECO:0007669"/>
    <property type="project" value="EnsemblFungi"/>
</dbReference>
<dbReference type="GO" id="GO:0000045">
    <property type="term" value="P:autophagosome assembly"/>
    <property type="evidence" value="ECO:0000318"/>
    <property type="project" value="GO_Central"/>
</dbReference>
<dbReference type="GO" id="GO:0000422">
    <property type="term" value="P:autophagy of mitochondrion"/>
    <property type="evidence" value="ECO:0000318"/>
    <property type="project" value="GO_Central"/>
</dbReference>
<dbReference type="GO" id="GO:0032258">
    <property type="term" value="P:cytoplasm to vacuole targeting by the Cvt pathway"/>
    <property type="evidence" value="ECO:0007669"/>
    <property type="project" value="EnsemblFungi"/>
</dbReference>
<dbReference type="GO" id="GO:0061723">
    <property type="term" value="P:glycophagy"/>
    <property type="evidence" value="ECO:0000318"/>
    <property type="project" value="GO_Central"/>
</dbReference>
<dbReference type="GO" id="GO:0044804">
    <property type="term" value="P:nucleophagy"/>
    <property type="evidence" value="ECO:0000318"/>
    <property type="project" value="GO_Central"/>
</dbReference>
<dbReference type="GO" id="GO:0034727">
    <property type="term" value="P:piecemeal microautophagy of the nucleus"/>
    <property type="evidence" value="ECO:0007669"/>
    <property type="project" value="EnsemblFungi"/>
</dbReference>
<dbReference type="GO" id="GO:0006612">
    <property type="term" value="P:protein targeting to membrane"/>
    <property type="evidence" value="ECO:0007669"/>
    <property type="project" value="EnsemblFungi"/>
</dbReference>
<dbReference type="FunFam" id="3.30.1460.50:FF:000018">
    <property type="entry name" value="Autophagy-related protein 3"/>
    <property type="match status" value="1"/>
</dbReference>
<dbReference type="Gene3D" id="3.30.1460.50">
    <property type="match status" value="1"/>
</dbReference>
<dbReference type="InterPro" id="IPR007135">
    <property type="entry name" value="Atg3/Atg10"/>
</dbReference>
<dbReference type="PANTHER" id="PTHR12866">
    <property type="entry name" value="UBIQUITIN-LIKE-CONJUGATING ENZYME ATG3"/>
    <property type="match status" value="1"/>
</dbReference>
<dbReference type="PANTHER" id="PTHR12866:SF2">
    <property type="entry name" value="UBIQUITIN-LIKE-CONJUGATING ENZYME ATG3"/>
    <property type="match status" value="1"/>
</dbReference>
<dbReference type="Pfam" id="PF03987">
    <property type="entry name" value="Autophagy_act_C"/>
    <property type="match status" value="2"/>
</dbReference>
<reference key="1">
    <citation type="journal article" date="2004" name="Proc. Natl. Acad. Sci. U.S.A.">
        <title>The diploid genome sequence of Candida albicans.</title>
        <authorList>
            <person name="Jones T."/>
            <person name="Federspiel N.A."/>
            <person name="Chibana H."/>
            <person name="Dungan J."/>
            <person name="Kalman S."/>
            <person name="Magee B.B."/>
            <person name="Newport G."/>
            <person name="Thorstenson Y.R."/>
            <person name="Agabian N."/>
            <person name="Magee P.T."/>
            <person name="Davis R.W."/>
            <person name="Scherer S."/>
        </authorList>
    </citation>
    <scope>NUCLEOTIDE SEQUENCE [LARGE SCALE GENOMIC DNA]</scope>
    <source>
        <strain>SC5314 / ATCC MYA-2876</strain>
    </source>
</reference>
<reference key="2">
    <citation type="journal article" date="2007" name="Genome Biol.">
        <title>Assembly of the Candida albicans genome into sixteen supercontigs aligned on the eight chromosomes.</title>
        <authorList>
            <person name="van het Hoog M."/>
            <person name="Rast T.J."/>
            <person name="Martchenko M."/>
            <person name="Grindle S."/>
            <person name="Dignard D."/>
            <person name="Hogues H."/>
            <person name="Cuomo C."/>
            <person name="Berriman M."/>
            <person name="Scherer S."/>
            <person name="Magee B.B."/>
            <person name="Whiteway M."/>
            <person name="Chibana H."/>
            <person name="Nantel A."/>
            <person name="Magee P.T."/>
        </authorList>
    </citation>
    <scope>GENOME REANNOTATION</scope>
    <source>
        <strain>SC5314 / ATCC MYA-2876</strain>
    </source>
</reference>
<reference key="3">
    <citation type="journal article" date="2013" name="Genome Biol.">
        <title>Assembly of a phased diploid Candida albicans genome facilitates allele-specific measurements and provides a simple model for repeat and indel structure.</title>
        <authorList>
            <person name="Muzzey D."/>
            <person name="Schwartz K."/>
            <person name="Weissman J.S."/>
            <person name="Sherlock G."/>
        </authorList>
    </citation>
    <scope>NUCLEOTIDE SEQUENCE [LARGE SCALE GENOMIC DNA]</scope>
    <scope>GENOME REANNOTATION</scope>
    <source>
        <strain>SC5314 / ATCC MYA-2876</strain>
    </source>
</reference>
<organism>
    <name type="scientific">Candida albicans (strain SC5314 / ATCC MYA-2876)</name>
    <name type="common">Yeast</name>
    <dbReference type="NCBI Taxonomy" id="237561"/>
    <lineage>
        <taxon>Eukaryota</taxon>
        <taxon>Fungi</taxon>
        <taxon>Dikarya</taxon>
        <taxon>Ascomycota</taxon>
        <taxon>Saccharomycotina</taxon>
        <taxon>Pichiomycetes</taxon>
        <taxon>Debaryomycetaceae</taxon>
        <taxon>Candida/Lodderomyces clade</taxon>
        <taxon>Candida</taxon>
    </lineage>
</organism>
<evidence type="ECO:0000250" key="1"/>
<evidence type="ECO:0000256" key="2">
    <source>
        <dbReference type="SAM" id="MobiDB-lite"/>
    </source>
</evidence>
<evidence type="ECO:0000305" key="3"/>
<accession>Q5ABQ7</accession>
<accession>A0A1D8PCB8</accession>
<accession>Q5ABF0</accession>
<keyword id="KW-0072">Autophagy</keyword>
<keyword id="KW-0963">Cytoplasm</keyword>
<keyword id="KW-0653">Protein transport</keyword>
<keyword id="KW-1185">Reference proteome</keyword>
<keyword id="KW-0813">Transport</keyword>
<keyword id="KW-0833">Ubl conjugation pathway</keyword>
<name>ATG3_CANAL</name>